<organism>
    <name type="scientific">Oryza sativa subsp. japonica</name>
    <name type="common">Rice</name>
    <dbReference type="NCBI Taxonomy" id="39947"/>
    <lineage>
        <taxon>Eukaryota</taxon>
        <taxon>Viridiplantae</taxon>
        <taxon>Streptophyta</taxon>
        <taxon>Embryophyta</taxon>
        <taxon>Tracheophyta</taxon>
        <taxon>Spermatophyta</taxon>
        <taxon>Magnoliopsida</taxon>
        <taxon>Liliopsida</taxon>
        <taxon>Poales</taxon>
        <taxon>Poaceae</taxon>
        <taxon>BOP clade</taxon>
        <taxon>Oryzoideae</taxon>
        <taxon>Oryzeae</taxon>
        <taxon>Oryzinae</taxon>
        <taxon>Oryza</taxon>
        <taxon>Oryza sativa</taxon>
    </lineage>
</organism>
<comment type="catalytic activity">
    <reaction>
        <text>O-phospho-L-seryl-[protein] + H2O = L-seryl-[protein] + phosphate</text>
        <dbReference type="Rhea" id="RHEA:20629"/>
        <dbReference type="Rhea" id="RHEA-COMP:9863"/>
        <dbReference type="Rhea" id="RHEA-COMP:11604"/>
        <dbReference type="ChEBI" id="CHEBI:15377"/>
        <dbReference type="ChEBI" id="CHEBI:29999"/>
        <dbReference type="ChEBI" id="CHEBI:43474"/>
        <dbReference type="ChEBI" id="CHEBI:83421"/>
        <dbReference type="EC" id="3.1.3.16"/>
    </reaction>
</comment>
<comment type="catalytic activity">
    <reaction>
        <text>O-phospho-L-threonyl-[protein] + H2O = L-threonyl-[protein] + phosphate</text>
        <dbReference type="Rhea" id="RHEA:47004"/>
        <dbReference type="Rhea" id="RHEA-COMP:11060"/>
        <dbReference type="Rhea" id="RHEA-COMP:11605"/>
        <dbReference type="ChEBI" id="CHEBI:15377"/>
        <dbReference type="ChEBI" id="CHEBI:30013"/>
        <dbReference type="ChEBI" id="CHEBI:43474"/>
        <dbReference type="ChEBI" id="CHEBI:61977"/>
        <dbReference type="EC" id="3.1.3.16"/>
    </reaction>
</comment>
<comment type="cofactor">
    <cofactor evidence="1">
        <name>Mg(2+)</name>
        <dbReference type="ChEBI" id="CHEBI:18420"/>
    </cofactor>
    <cofactor evidence="1">
        <name>Mn(2+)</name>
        <dbReference type="ChEBI" id="CHEBI:29035"/>
    </cofactor>
    <text evidence="1">Binds 2 magnesium or manganese ions per subunit.</text>
</comment>
<comment type="similarity">
    <text evidence="3">Belongs to the PP2C family.</text>
</comment>
<comment type="sequence caution" evidence="3">
    <conflict type="erroneous gene model prediction">
        <sequence resource="EMBL-CDS" id="BAC16709"/>
    </conflict>
</comment>
<comment type="sequence caution" evidence="3">
    <conflict type="erroneous gene model prediction">
        <sequence resource="EMBL-CDS" id="BAF21650"/>
    </conflict>
</comment>
<feature type="chain" id="PRO_0000363309" description="Probable protein phosphatase 2C 62">
    <location>
        <begin position="1"/>
        <end position="290"/>
    </location>
</feature>
<feature type="domain" description="PPM-type phosphatase" evidence="2">
    <location>
        <begin position="38"/>
        <end position="288"/>
    </location>
</feature>
<feature type="binding site" evidence="1">
    <location>
        <position position="75"/>
    </location>
    <ligand>
        <name>Mn(2+)</name>
        <dbReference type="ChEBI" id="CHEBI:29035"/>
        <label>1</label>
    </ligand>
</feature>
<feature type="binding site" evidence="1">
    <location>
        <position position="75"/>
    </location>
    <ligand>
        <name>Mn(2+)</name>
        <dbReference type="ChEBI" id="CHEBI:29035"/>
        <label>2</label>
    </ligand>
</feature>
<feature type="binding site" evidence="1">
    <location>
        <position position="76"/>
    </location>
    <ligand>
        <name>Mn(2+)</name>
        <dbReference type="ChEBI" id="CHEBI:29035"/>
        <label>1</label>
    </ligand>
</feature>
<feature type="binding site" evidence="1">
    <location>
        <position position="240"/>
    </location>
    <ligand>
        <name>Mn(2+)</name>
        <dbReference type="ChEBI" id="CHEBI:29035"/>
        <label>2</label>
    </ligand>
</feature>
<feature type="binding site" evidence="1">
    <location>
        <position position="279"/>
    </location>
    <ligand>
        <name>Mn(2+)</name>
        <dbReference type="ChEBI" id="CHEBI:29035"/>
        <label>2</label>
    </ligand>
</feature>
<proteinExistence type="evidence at transcript level"/>
<evidence type="ECO:0000250" key="1"/>
<evidence type="ECO:0000255" key="2">
    <source>
        <dbReference type="PROSITE-ProRule" id="PRU01082"/>
    </source>
</evidence>
<evidence type="ECO:0000305" key="3"/>
<sequence length="290" mass="31741">MAGKEIYHKMKDKVKDAFSSSGPETGKGKTKLSGKRVKHGYHLVKGKSNHPMEDYLVAEYRQEGEHDLGLFAIFDGHLGHTVPDFLRSHLFDNILKQPEFLSNPQAAIRNAYQLTDAKILESAAELGRGGSTAVTAILISSENSVNLVVANVGDSRAVISKSGVAKQLSVDHEPNKERHSIEKKGGFVSNLPGDVPRVDGQLAVARAFGDRSLKKHLSSEPDVVEEPIDENTDFLILASDGLWKVMSNQEAVDEIKDFKDAQAAAKHLTEQAVNRKSKDDISCIVVKFLC</sequence>
<gene>
    <name type="ordered locus">Os07g0507000</name>
    <name type="ordered locus">LOC_Os07g32380</name>
    <name type="ORF">OsJ_023427</name>
    <name type="ORF">OSJNBb0062D12.125</name>
</gene>
<keyword id="KW-0378">Hydrolase</keyword>
<keyword id="KW-0460">Magnesium</keyword>
<keyword id="KW-0464">Manganese</keyword>
<keyword id="KW-0479">Metal-binding</keyword>
<keyword id="KW-0904">Protein phosphatase</keyword>
<keyword id="KW-1185">Reference proteome</keyword>
<name>P2C62_ORYSJ</name>
<accession>Q0D673</accession>
<accession>A0A0P0X6T5</accession>
<accession>Q8H3G4</accession>
<dbReference type="EC" id="3.1.3.16"/>
<dbReference type="EMBL" id="AP005127">
    <property type="protein sequence ID" value="BAC16709.1"/>
    <property type="status" value="ALT_SEQ"/>
    <property type="molecule type" value="Genomic_DNA"/>
</dbReference>
<dbReference type="EMBL" id="AP008213">
    <property type="protein sequence ID" value="BAF21650.2"/>
    <property type="status" value="ALT_SEQ"/>
    <property type="molecule type" value="Genomic_DNA"/>
</dbReference>
<dbReference type="EMBL" id="AP014963">
    <property type="protein sequence ID" value="BAT01677.1"/>
    <property type="molecule type" value="Genomic_DNA"/>
</dbReference>
<dbReference type="EMBL" id="CM000144">
    <property type="protein sequence ID" value="EAZ39944.1"/>
    <property type="molecule type" value="Genomic_DNA"/>
</dbReference>
<dbReference type="EMBL" id="AK243539">
    <property type="protein sequence ID" value="BAH01643.1"/>
    <property type="molecule type" value="mRNA"/>
</dbReference>
<dbReference type="RefSeq" id="XP_015646697.1">
    <property type="nucleotide sequence ID" value="XM_015791211.1"/>
</dbReference>
<dbReference type="SMR" id="Q0D673"/>
<dbReference type="FunCoup" id="Q0D673">
    <property type="interactions" value="407"/>
</dbReference>
<dbReference type="STRING" id="39947.Q0D673"/>
<dbReference type="PaxDb" id="39947-Q0D673"/>
<dbReference type="EnsemblPlants" id="Os07t0507000-01">
    <property type="protein sequence ID" value="Os07t0507000-01"/>
    <property type="gene ID" value="Os07g0507000"/>
</dbReference>
<dbReference type="Gramene" id="Os07t0507000-01">
    <property type="protein sequence ID" value="Os07t0507000-01"/>
    <property type="gene ID" value="Os07g0507000"/>
</dbReference>
<dbReference type="KEGG" id="dosa:Os07g0507000"/>
<dbReference type="eggNOG" id="KOG0698">
    <property type="taxonomic scope" value="Eukaryota"/>
</dbReference>
<dbReference type="HOGENOM" id="CLU_013173_0_1_1"/>
<dbReference type="InParanoid" id="Q0D673"/>
<dbReference type="OMA" id="PNMERQS"/>
<dbReference type="OrthoDB" id="10264738at2759"/>
<dbReference type="Proteomes" id="UP000000763">
    <property type="component" value="Chromosome 7"/>
</dbReference>
<dbReference type="Proteomes" id="UP000007752">
    <property type="component" value="Chromosome 7"/>
</dbReference>
<dbReference type="Proteomes" id="UP000059680">
    <property type="component" value="Chromosome 7"/>
</dbReference>
<dbReference type="GO" id="GO:0046872">
    <property type="term" value="F:metal ion binding"/>
    <property type="evidence" value="ECO:0007669"/>
    <property type="project" value="UniProtKB-KW"/>
</dbReference>
<dbReference type="GO" id="GO:0004722">
    <property type="term" value="F:protein serine/threonine phosphatase activity"/>
    <property type="evidence" value="ECO:0007669"/>
    <property type="project" value="UniProtKB-EC"/>
</dbReference>
<dbReference type="GO" id="GO:0007165">
    <property type="term" value="P:signal transduction"/>
    <property type="evidence" value="ECO:0000318"/>
    <property type="project" value="GO_Central"/>
</dbReference>
<dbReference type="CDD" id="cd00143">
    <property type="entry name" value="PP2Cc"/>
    <property type="match status" value="1"/>
</dbReference>
<dbReference type="FunFam" id="3.60.40.10:FF:000010">
    <property type="entry name" value="Probable protein phosphatase 2C 39"/>
    <property type="match status" value="1"/>
</dbReference>
<dbReference type="Gene3D" id="3.60.40.10">
    <property type="entry name" value="PPM-type phosphatase domain"/>
    <property type="match status" value="1"/>
</dbReference>
<dbReference type="InterPro" id="IPR015655">
    <property type="entry name" value="PP2C"/>
</dbReference>
<dbReference type="InterPro" id="IPR036457">
    <property type="entry name" value="PPM-type-like_dom_sf"/>
</dbReference>
<dbReference type="InterPro" id="IPR001932">
    <property type="entry name" value="PPM-type_phosphatase-like_dom"/>
</dbReference>
<dbReference type="PANTHER" id="PTHR47992">
    <property type="entry name" value="PROTEIN PHOSPHATASE"/>
    <property type="match status" value="1"/>
</dbReference>
<dbReference type="Pfam" id="PF00481">
    <property type="entry name" value="PP2C"/>
    <property type="match status" value="1"/>
</dbReference>
<dbReference type="SMART" id="SM00331">
    <property type="entry name" value="PP2C_SIG"/>
    <property type="match status" value="1"/>
</dbReference>
<dbReference type="SMART" id="SM00332">
    <property type="entry name" value="PP2Cc"/>
    <property type="match status" value="1"/>
</dbReference>
<dbReference type="SUPFAM" id="SSF81606">
    <property type="entry name" value="PP2C-like"/>
    <property type="match status" value="1"/>
</dbReference>
<dbReference type="PROSITE" id="PS51746">
    <property type="entry name" value="PPM_2"/>
    <property type="match status" value="1"/>
</dbReference>
<protein>
    <recommendedName>
        <fullName>Probable protein phosphatase 2C 62</fullName>
        <shortName>OsPP2C62</shortName>
        <ecNumber>3.1.3.16</ecNumber>
    </recommendedName>
</protein>
<reference key="1">
    <citation type="journal article" date="2005" name="Nature">
        <title>The map-based sequence of the rice genome.</title>
        <authorList>
            <consortium name="International rice genome sequencing project (IRGSP)"/>
        </authorList>
    </citation>
    <scope>NUCLEOTIDE SEQUENCE [LARGE SCALE GENOMIC DNA]</scope>
    <source>
        <strain>cv. Nipponbare</strain>
    </source>
</reference>
<reference key="2">
    <citation type="journal article" date="2008" name="Nucleic Acids Res.">
        <title>The rice annotation project database (RAP-DB): 2008 update.</title>
        <authorList>
            <consortium name="The rice annotation project (RAP)"/>
        </authorList>
    </citation>
    <scope>GENOME REANNOTATION</scope>
    <source>
        <strain>cv. Nipponbare</strain>
    </source>
</reference>
<reference key="3">
    <citation type="journal article" date="2013" name="Rice">
        <title>Improvement of the Oryza sativa Nipponbare reference genome using next generation sequence and optical map data.</title>
        <authorList>
            <person name="Kawahara Y."/>
            <person name="de la Bastide M."/>
            <person name="Hamilton J.P."/>
            <person name="Kanamori H."/>
            <person name="McCombie W.R."/>
            <person name="Ouyang S."/>
            <person name="Schwartz D.C."/>
            <person name="Tanaka T."/>
            <person name="Wu J."/>
            <person name="Zhou S."/>
            <person name="Childs K.L."/>
            <person name="Davidson R.M."/>
            <person name="Lin H."/>
            <person name="Quesada-Ocampo L."/>
            <person name="Vaillancourt B."/>
            <person name="Sakai H."/>
            <person name="Lee S.S."/>
            <person name="Kim J."/>
            <person name="Numa H."/>
            <person name="Itoh T."/>
            <person name="Buell C.R."/>
            <person name="Matsumoto T."/>
        </authorList>
    </citation>
    <scope>GENOME REANNOTATION</scope>
    <source>
        <strain>cv. Nipponbare</strain>
    </source>
</reference>
<reference key="4">
    <citation type="journal article" date="2005" name="PLoS Biol.">
        <title>The genomes of Oryza sativa: a history of duplications.</title>
        <authorList>
            <person name="Yu J."/>
            <person name="Wang J."/>
            <person name="Lin W."/>
            <person name="Li S."/>
            <person name="Li H."/>
            <person name="Zhou J."/>
            <person name="Ni P."/>
            <person name="Dong W."/>
            <person name="Hu S."/>
            <person name="Zeng C."/>
            <person name="Zhang J."/>
            <person name="Zhang Y."/>
            <person name="Li R."/>
            <person name="Xu Z."/>
            <person name="Li S."/>
            <person name="Li X."/>
            <person name="Zheng H."/>
            <person name="Cong L."/>
            <person name="Lin L."/>
            <person name="Yin J."/>
            <person name="Geng J."/>
            <person name="Li G."/>
            <person name="Shi J."/>
            <person name="Liu J."/>
            <person name="Lv H."/>
            <person name="Li J."/>
            <person name="Wang J."/>
            <person name="Deng Y."/>
            <person name="Ran L."/>
            <person name="Shi X."/>
            <person name="Wang X."/>
            <person name="Wu Q."/>
            <person name="Li C."/>
            <person name="Ren X."/>
            <person name="Wang J."/>
            <person name="Wang X."/>
            <person name="Li D."/>
            <person name="Liu D."/>
            <person name="Zhang X."/>
            <person name="Ji Z."/>
            <person name="Zhao W."/>
            <person name="Sun Y."/>
            <person name="Zhang Z."/>
            <person name="Bao J."/>
            <person name="Han Y."/>
            <person name="Dong L."/>
            <person name="Ji J."/>
            <person name="Chen P."/>
            <person name="Wu S."/>
            <person name="Liu J."/>
            <person name="Xiao Y."/>
            <person name="Bu D."/>
            <person name="Tan J."/>
            <person name="Yang L."/>
            <person name="Ye C."/>
            <person name="Zhang J."/>
            <person name="Xu J."/>
            <person name="Zhou Y."/>
            <person name="Yu Y."/>
            <person name="Zhang B."/>
            <person name="Zhuang S."/>
            <person name="Wei H."/>
            <person name="Liu B."/>
            <person name="Lei M."/>
            <person name="Yu H."/>
            <person name="Li Y."/>
            <person name="Xu H."/>
            <person name="Wei S."/>
            <person name="He X."/>
            <person name="Fang L."/>
            <person name="Zhang Z."/>
            <person name="Zhang Y."/>
            <person name="Huang X."/>
            <person name="Su Z."/>
            <person name="Tong W."/>
            <person name="Li J."/>
            <person name="Tong Z."/>
            <person name="Li S."/>
            <person name="Ye J."/>
            <person name="Wang L."/>
            <person name="Fang L."/>
            <person name="Lei T."/>
            <person name="Chen C.-S."/>
            <person name="Chen H.-C."/>
            <person name="Xu Z."/>
            <person name="Li H."/>
            <person name="Huang H."/>
            <person name="Zhang F."/>
            <person name="Xu H."/>
            <person name="Li N."/>
            <person name="Zhao C."/>
            <person name="Li S."/>
            <person name="Dong L."/>
            <person name="Huang Y."/>
            <person name="Li L."/>
            <person name="Xi Y."/>
            <person name="Qi Q."/>
            <person name="Li W."/>
            <person name="Zhang B."/>
            <person name="Hu W."/>
            <person name="Zhang Y."/>
            <person name="Tian X."/>
            <person name="Jiao Y."/>
            <person name="Liang X."/>
            <person name="Jin J."/>
            <person name="Gao L."/>
            <person name="Zheng W."/>
            <person name="Hao B."/>
            <person name="Liu S.-M."/>
            <person name="Wang W."/>
            <person name="Yuan L."/>
            <person name="Cao M."/>
            <person name="McDermott J."/>
            <person name="Samudrala R."/>
            <person name="Wang J."/>
            <person name="Wong G.K.-S."/>
            <person name="Yang H."/>
        </authorList>
    </citation>
    <scope>NUCLEOTIDE SEQUENCE [LARGE SCALE GENOMIC DNA]</scope>
    <source>
        <strain>cv. Nipponbare</strain>
    </source>
</reference>
<reference key="5">
    <citation type="submission" date="2006-10" db="EMBL/GenBank/DDBJ databases">
        <title>Oryza sativa full length cDNA.</title>
        <authorList>
            <consortium name="The rice full-length cDNA consortium"/>
        </authorList>
    </citation>
    <scope>NUCLEOTIDE SEQUENCE [LARGE SCALE MRNA]</scope>
    <source>
        <strain>cv. Nipponbare</strain>
    </source>
</reference>
<reference key="6">
    <citation type="journal article" date="2008" name="BMC Genomics">
        <title>Genome-wide and expression analysis of protein phosphatase 2C in rice and Arabidopsis.</title>
        <authorList>
            <person name="Xue T."/>
            <person name="Wang D."/>
            <person name="Zhang S."/>
            <person name="Ehlting J."/>
            <person name="Ni F."/>
            <person name="Jacab S."/>
            <person name="Zheng C."/>
            <person name="Zhong Y."/>
        </authorList>
    </citation>
    <scope>GENE FAMILY</scope>
    <scope>NOMENCLATURE</scope>
</reference>